<accession>P32759</accession>
<name>A1AT_CYPCA</name>
<keyword id="KW-0325">Glycoprotein</keyword>
<keyword id="KW-0646">Protease inhibitor</keyword>
<keyword id="KW-1185">Reference proteome</keyword>
<keyword id="KW-0964">Secreted</keyword>
<keyword id="KW-0722">Serine protease inhibitor</keyword>
<keyword id="KW-0732">Signal</keyword>
<feature type="signal peptide" evidence="2">
    <location>
        <begin position="1"/>
        <end position="19"/>
    </location>
</feature>
<feature type="chain" id="PRO_0000032407" description="Alpha-1-antitrypsin homolog">
    <location>
        <begin position="20"/>
        <end position="372"/>
    </location>
</feature>
<feature type="region of interest" description="RCL">
    <location>
        <begin position="328"/>
        <end position="347"/>
    </location>
</feature>
<feature type="site" description="Reactive bond" evidence="1">
    <location>
        <begin position="337"/>
        <end position="338"/>
    </location>
</feature>
<feature type="glycosylation site" description="N-linked (GlcNAc...) asparagine" evidence="2">
    <location>
        <position position="214"/>
    </location>
</feature>
<feature type="glycosylation site" description="N-linked (GlcNAc...) asparagine" evidence="2">
    <location>
        <position position="226"/>
    </location>
</feature>
<reference key="1">
    <citation type="journal article" date="1995" name="J. Neurochem.">
        <title>A protease inhibitor of the serpin family is a major protein in carp perimeningeal fluid: II. cDNA cloning, sequence analysis, and Escherichia coli expression.</title>
        <authorList>
            <person name="Huang C.-J."/>
            <person name="Lee M.S."/>
            <person name="Huang F.-L."/>
            <person name="Chang G.D."/>
        </authorList>
    </citation>
    <scope>NUCLEOTIDE SEQUENCE [MRNA]</scope>
    <source>
        <tissue>Cerebrospinal fluid</tissue>
    </source>
</reference>
<organism>
    <name type="scientific">Cyprinus carpio</name>
    <name type="common">Common carp</name>
    <dbReference type="NCBI Taxonomy" id="7962"/>
    <lineage>
        <taxon>Eukaryota</taxon>
        <taxon>Metazoa</taxon>
        <taxon>Chordata</taxon>
        <taxon>Craniata</taxon>
        <taxon>Vertebrata</taxon>
        <taxon>Euteleostomi</taxon>
        <taxon>Actinopterygii</taxon>
        <taxon>Neopterygii</taxon>
        <taxon>Teleostei</taxon>
        <taxon>Ostariophysi</taxon>
        <taxon>Cypriniformes</taxon>
        <taxon>Cyprinidae</taxon>
        <taxon>Cyprininae</taxon>
        <taxon>Cyprinus</taxon>
    </lineage>
</organism>
<proteinExistence type="evidence at transcript level"/>
<protein>
    <recommendedName>
        <fullName>Alpha-1-antitrypsin homolog</fullName>
    </recommendedName>
</protein>
<evidence type="ECO:0000250" key="1"/>
<evidence type="ECO:0000255" key="2"/>
<evidence type="ECO:0000305" key="3"/>
<sequence length="372" mass="41900">MPATCLLHTMLTLPSPSTRNLRSIQMPRARTFSSPSRYRNGFEHAGCRCQGSTLSQIYSSLGYSGLQASQVNEGYEHLIHMLGHSREAMQLEAGAGVAIREGFKVVDQFLKDVQHYYNSEAFSVDFSKPEIAAEEINQFIAKKTNDKITNMVKDLDSDTVMMLINYMYFRGKWDKPFDAQLTHKADFKVDEDTTVQVDMMKRTGRYDIYQDPVNQTTVMMVPYKGNTSMMIIFPDDGKMKELEESISRHHLKNWHDKLFRSSVDLFMPKFSITATSKLKGILEDMGVTDAFGDTADLSGLTEEVKVKVSQVVHKAVLSVDEKGTEAAAATTIEIMPMSLPDTVILNRPFLVLIVEDTTKSILFMGKITNPTE</sequence>
<comment type="subcellular location">
    <subcellularLocation>
        <location>Secreted</location>
    </subcellularLocation>
</comment>
<comment type="domain">
    <text evidence="1">The reactive center loop (RCL) extends out from the body of the protein and directs binding to the target protease. The protease cleaves the serpin at the reactive site within the RCL, establishing a covalent linkage between the serpin reactive site and the active site of the protease. The resulting inactive serpin-protease complex is highly stable (By similarity).</text>
</comment>
<comment type="similarity">
    <text evidence="3">Belongs to the serpin family.</text>
</comment>
<dbReference type="EMBL" id="L08689">
    <property type="protein sequence ID" value="AAA73953.1"/>
    <property type="molecule type" value="mRNA"/>
</dbReference>
<dbReference type="PIR" id="I50492">
    <property type="entry name" value="I50492"/>
</dbReference>
<dbReference type="SMR" id="P32759"/>
<dbReference type="Proteomes" id="UP000694384">
    <property type="component" value="Unplaced"/>
</dbReference>
<dbReference type="Proteomes" id="UP000694427">
    <property type="component" value="Unplaced"/>
</dbReference>
<dbReference type="Proteomes" id="UP000694700">
    <property type="component" value="Unplaced"/>
</dbReference>
<dbReference type="Proteomes" id="UP000694701">
    <property type="component" value="Unplaced"/>
</dbReference>
<dbReference type="Proteomes" id="UP001155660">
    <property type="component" value="Unplaced"/>
</dbReference>
<dbReference type="GO" id="GO:0005615">
    <property type="term" value="C:extracellular space"/>
    <property type="evidence" value="ECO:0007669"/>
    <property type="project" value="InterPro"/>
</dbReference>
<dbReference type="GO" id="GO:0004867">
    <property type="term" value="F:serine-type endopeptidase inhibitor activity"/>
    <property type="evidence" value="ECO:0007669"/>
    <property type="project" value="UniProtKB-KW"/>
</dbReference>
<dbReference type="FunFam" id="2.30.39.10:FF:000003">
    <property type="entry name" value="alpha-1-antitrypsin isoform X1"/>
    <property type="match status" value="1"/>
</dbReference>
<dbReference type="FunFam" id="2.10.310.10:FF:000001">
    <property type="entry name" value="Serpin family A member 1"/>
    <property type="match status" value="1"/>
</dbReference>
<dbReference type="Gene3D" id="2.30.39.10">
    <property type="entry name" value="Alpha-1-antitrypsin, domain 1"/>
    <property type="match status" value="1"/>
</dbReference>
<dbReference type="Gene3D" id="3.30.497.10">
    <property type="entry name" value="Antithrombin, subunit I, domain 2"/>
    <property type="match status" value="1"/>
</dbReference>
<dbReference type="Gene3D" id="2.10.310.10">
    <property type="entry name" value="Serpins superfamily"/>
    <property type="match status" value="1"/>
</dbReference>
<dbReference type="InterPro" id="IPR023795">
    <property type="entry name" value="Serpin_CS"/>
</dbReference>
<dbReference type="InterPro" id="IPR023796">
    <property type="entry name" value="Serpin_dom"/>
</dbReference>
<dbReference type="InterPro" id="IPR000215">
    <property type="entry name" value="Serpin_fam"/>
</dbReference>
<dbReference type="InterPro" id="IPR036186">
    <property type="entry name" value="Serpin_sf"/>
</dbReference>
<dbReference type="InterPro" id="IPR042178">
    <property type="entry name" value="Serpin_sf_1"/>
</dbReference>
<dbReference type="InterPro" id="IPR042185">
    <property type="entry name" value="Serpin_sf_2"/>
</dbReference>
<dbReference type="PANTHER" id="PTHR11461:SF363">
    <property type="entry name" value="SERINE (OR CYSTEINE) PROTEINASE INHIBITOR, CLADE A (ALPHA-1 ANTIPROTEINASE, ANTITRYPSIN), MEMBER 1, LIKE PRECURSOR-RELATED"/>
    <property type="match status" value="1"/>
</dbReference>
<dbReference type="PANTHER" id="PTHR11461">
    <property type="entry name" value="SERINE PROTEASE INHIBITOR, SERPIN"/>
    <property type="match status" value="1"/>
</dbReference>
<dbReference type="Pfam" id="PF00079">
    <property type="entry name" value="Serpin"/>
    <property type="match status" value="1"/>
</dbReference>
<dbReference type="SMART" id="SM00093">
    <property type="entry name" value="SERPIN"/>
    <property type="match status" value="1"/>
</dbReference>
<dbReference type="SUPFAM" id="SSF56574">
    <property type="entry name" value="Serpins"/>
    <property type="match status" value="1"/>
</dbReference>
<dbReference type="PROSITE" id="PS00284">
    <property type="entry name" value="SERPIN"/>
    <property type="match status" value="1"/>
</dbReference>